<name>YPA1_ECOLX</name>
<geneLocation type="plasmid">
    <name>pAO2</name>
</geneLocation>
<proteinExistence type="predicted"/>
<reference key="1">
    <citation type="journal article" date="1979" name="Mol. Gen. Genet.">
        <title>Nucleotide sequence of small ColE1 derivatives: structure of the regions essential for autonomous replication and colicin E1 immunity.</title>
        <authorList>
            <person name="Oka A."/>
            <person name="Nomura N."/>
            <person name="Morita M."/>
            <person name="Sugisaki H."/>
            <person name="Sugimoto K."/>
            <person name="Takanami M."/>
        </authorList>
    </citation>
    <scope>NUCLEOTIDE SEQUENCE [GENOMIC DNA]</scope>
</reference>
<reference key="2">
    <citation type="journal article" date="1980" name="Nucleic Acids Res.">
        <title>The nucleotide sequence surrounding the replication origin of the cop3 mutant of the bacteriocinogenic plasmid Clo DF13.</title>
        <authorList>
            <person name="Stuitje A.R."/>
            <person name="Veltkamp E."/>
            <person name="Maat J."/>
            <person name="Heyneker H.L."/>
        </authorList>
    </citation>
    <scope>IDENTIFICATION</scope>
</reference>
<keyword id="KW-0614">Plasmid</keyword>
<organism>
    <name type="scientific">Escherichia coli</name>
    <dbReference type="NCBI Taxonomy" id="562"/>
    <lineage>
        <taxon>Bacteria</taxon>
        <taxon>Pseudomonadati</taxon>
        <taxon>Pseudomonadota</taxon>
        <taxon>Gammaproteobacteria</taxon>
        <taxon>Enterobacterales</taxon>
        <taxon>Enterobacteriaceae</taxon>
        <taxon>Escherichia</taxon>
    </lineage>
</organism>
<protein>
    <recommendedName>
        <fullName>Putative uncharacterized protein 1</fullName>
    </recommendedName>
</protein>
<evidence type="ECO:0000256" key="1">
    <source>
        <dbReference type="SAM" id="MobiDB-lite"/>
    </source>
</evidence>
<accession>P03845</accession>
<feature type="chain" id="PRO_0000068500" description="Putative uncharacterized protein 1">
    <location>
        <begin position="1"/>
        <end position="42"/>
    </location>
</feature>
<feature type="region of interest" description="Disordered" evidence="1">
    <location>
        <begin position="20"/>
        <end position="42"/>
    </location>
</feature>
<dbReference type="PIR" id="C93118">
    <property type="entry name" value="QQEC45"/>
</dbReference>
<sequence length="42" mass="4862">MALRRALPGWTQDDSYRIRRSGRAERGVRAHSPAWSERPTPN</sequence>